<reference key="1">
    <citation type="journal article" date="1998" name="J. Biol. Chem.">
        <title>Purification and characterization of a novel physiological substrate for calcineurin in mammalian cells.</title>
        <authorList>
            <person name="Groblewski G.E."/>
            <person name="Yoshida M."/>
            <person name="Bragado M.J."/>
            <person name="Ernst S.A."/>
            <person name="Leykam J."/>
            <person name="Williams J.A."/>
        </authorList>
    </citation>
    <scope>NUCLEOTIDE SEQUENCE [MRNA]</scope>
    <scope>TISSUE SPECIFICITY</scope>
    <scope>SUBCELLULAR LOCATION</scope>
    <scope>PHOSPHORYLATION</scope>
</reference>
<reference key="2">
    <citation type="journal article" date="2004" name="Genome Res.">
        <title>The status, quality, and expansion of the NIH full-length cDNA project: the Mammalian Gene Collection (MGC).</title>
        <authorList>
            <consortium name="The MGC Project Team"/>
        </authorList>
    </citation>
    <scope>NUCLEOTIDE SEQUENCE [LARGE SCALE MRNA]</scope>
    <source>
        <tissue>Lung</tissue>
    </source>
</reference>
<reference key="3">
    <citation type="journal article" date="1994" name="J. Biol. Chem.">
        <title>Cyclosporin A inhibits Ca2+/calmodulin-dependent protein phosphatase and secretion in pancreatic acinar cells.</title>
        <authorList>
            <person name="Groblewski G.E."/>
            <person name="Wagner A.C."/>
            <person name="Williams J.A."/>
        </authorList>
    </citation>
    <scope>DEPHOSPHORYLATION BY CALCINEURIN</scope>
</reference>
<reference key="4">
    <citation type="journal article" date="2003" name="Am. J. Physiol.">
        <title>CRHSP-24 phosphorylation is regulated by multiple signaling pathways in pancreatic acinar cells.</title>
        <authorList>
            <person name="Schaefer C."/>
            <person name="Steffen H."/>
            <person name="Krzykowski K.J."/>
            <person name="Goke B."/>
            <person name="Groblewski G.E."/>
        </authorList>
    </citation>
    <scope>REGULATION OF PHOSPHORYLATION</scope>
</reference>
<reference key="5">
    <citation type="journal article" date="2006" name="J. Proteome Res.">
        <title>Phosphoproteomic analysis of rat liver by high capacity IMAC and LC-MS/MS.</title>
        <authorList>
            <person name="Moser K."/>
            <person name="White F.M."/>
        </authorList>
    </citation>
    <scope>PHOSPHORYLATION [LARGE SCALE ANALYSIS] AT SER-41</scope>
    <scope>IDENTIFICATION BY MASS SPECTROMETRY [LARGE SCALE ANALYSIS]</scope>
</reference>
<reference key="6">
    <citation type="journal article" date="2006" name="Proc. Natl. Acad. Sci. U.S.A.">
        <title>Quantitative phosphoproteomics of vasopressin-sensitive renal cells: regulation of aquaporin-2 phosphorylation at two sites.</title>
        <authorList>
            <person name="Hoffert J.D."/>
            <person name="Pisitkun T."/>
            <person name="Wang G."/>
            <person name="Shen R.-F."/>
            <person name="Knepper M.A."/>
        </authorList>
    </citation>
    <scope>PHOSPHORYLATION [LARGE SCALE ANALYSIS] AT SER-41 AND SER-52</scope>
    <scope>IDENTIFICATION BY MASS SPECTROMETRY [LARGE SCALE ANALYSIS]</scope>
</reference>
<reference key="7">
    <citation type="journal article" date="2009" name="Biochem. Biophys. Res. Commun.">
        <title>Identification of calcineurin regulated phosphorylation sites on CRHSP-24.</title>
        <authorList>
            <person name="Lee S."/>
            <person name="Wishart M.J."/>
            <person name="Williams J.A."/>
        </authorList>
    </citation>
    <scope>PHOSPHORYLATION AT SER-30; SER-32; SER41 AND SER-52</scope>
    <scope>DEPHOSPHORYLATION BY CALCINEURIN</scope>
</reference>
<reference key="8">
    <citation type="journal article" date="2012" name="Nat. Commun.">
        <title>Quantitative maps of protein phosphorylation sites across 14 different rat organs and tissues.</title>
        <authorList>
            <person name="Lundby A."/>
            <person name="Secher A."/>
            <person name="Lage K."/>
            <person name="Nordsborg N.B."/>
            <person name="Dmytriyev A."/>
            <person name="Lundby C."/>
            <person name="Olsen J.V."/>
        </authorList>
    </citation>
    <scope>PHOSPHORYLATION [LARGE SCALE ANALYSIS] AT SER-30; SER-32; SER-41 AND SER-52</scope>
    <scope>IDENTIFICATION BY MASS SPECTROMETRY [LARGE SCALE ANALYSIS]</scope>
</reference>
<organism>
    <name type="scientific">Rattus norvegicus</name>
    <name type="common">Rat</name>
    <dbReference type="NCBI Taxonomy" id="10116"/>
    <lineage>
        <taxon>Eukaryota</taxon>
        <taxon>Metazoa</taxon>
        <taxon>Chordata</taxon>
        <taxon>Craniata</taxon>
        <taxon>Vertebrata</taxon>
        <taxon>Euteleostomi</taxon>
        <taxon>Mammalia</taxon>
        <taxon>Eutheria</taxon>
        <taxon>Euarchontoglires</taxon>
        <taxon>Glires</taxon>
        <taxon>Rodentia</taxon>
        <taxon>Myomorpha</taxon>
        <taxon>Muroidea</taxon>
        <taxon>Muridae</taxon>
        <taxon>Murinae</taxon>
        <taxon>Rattus</taxon>
    </lineage>
</organism>
<protein>
    <recommendedName>
        <fullName>Calcium-regulated heat stable protein 1</fullName>
    </recommendedName>
    <alternativeName>
        <fullName>Calcium-regulated heat-stable protein of 24 kDa</fullName>
        <shortName>CRHSP-24</shortName>
    </alternativeName>
</protein>
<feature type="initiator methionine" description="Removed" evidence="2">
    <location>
        <position position="1"/>
    </location>
</feature>
<feature type="chain" id="PRO_0000100232" description="Calcium-regulated heat stable protein 1">
    <location>
        <begin position="2"/>
        <end position="147"/>
    </location>
</feature>
<feature type="domain" description="CSD">
    <location>
        <begin position="62"/>
        <end position="129"/>
    </location>
</feature>
<feature type="region of interest" description="Disordered" evidence="3">
    <location>
        <begin position="1"/>
        <end position="49"/>
    </location>
</feature>
<feature type="compositionally biased region" description="Pro residues" evidence="3">
    <location>
        <begin position="1"/>
        <end position="12"/>
    </location>
</feature>
<feature type="modified residue" description="N-acetylserine" evidence="2">
    <location>
        <position position="2"/>
    </location>
</feature>
<feature type="modified residue" description="Phosphoserine" evidence="4 8">
    <location>
        <position position="30"/>
    </location>
</feature>
<feature type="modified residue" description="Phosphoserine" evidence="4 8">
    <location>
        <position position="32"/>
    </location>
</feature>
<feature type="modified residue" description="Phosphoserine" evidence="6 7 8">
    <location>
        <position position="41"/>
    </location>
</feature>
<feature type="modified residue" description="Phosphothreonine" evidence="2">
    <location>
        <position position="45"/>
    </location>
</feature>
<feature type="modified residue" description="Phosphoserine" evidence="4 7 8">
    <location>
        <position position="52"/>
    </location>
</feature>
<feature type="modified residue" description="Phosphoserine" evidence="2">
    <location>
        <position position="58"/>
    </location>
</feature>
<feature type="modified residue" description="Phosphoserine" evidence="2">
    <location>
        <position position="146"/>
    </location>
</feature>
<feature type="modified residue" description="Phosphoserine" evidence="2">
    <location>
        <position position="147"/>
    </location>
</feature>
<comment type="function">
    <text evidence="1">Binds mRNA and regulates the stability of target mRNA.</text>
</comment>
<comment type="subunit">
    <text evidence="1">Homodimer. Interacts with STYX (By similarity).</text>
</comment>
<comment type="subcellular location">
    <subcellularLocation>
        <location evidence="5">Cytoplasm</location>
    </subcellularLocation>
    <subcellularLocation>
        <location evidence="1">Cytoplasm</location>
        <location evidence="1">P-body</location>
    </subcellularLocation>
    <subcellularLocation>
        <location evidence="1">Cytoplasmic granule</location>
    </subcellularLocation>
    <text evidence="1">Detected at cytoplasmic stress granules and P-bodies. Detected at exosome granules where mRNA is degraded (By similarity).</text>
</comment>
<comment type="tissue specificity">
    <text evidence="5">Widely expressed.</text>
</comment>
<comment type="PTM">
    <text evidence="1 4 5">Can be phosphorylated by DYRK2 (in vitro) (By similarity). Dephosphorylated by calcineurin in a Ca(2+) dependent manner, and probably by PP2A or PP4 serine phosphatases in cAMP- and PKC-mediated pathways.</text>
</comment>
<evidence type="ECO:0000250" key="1"/>
<evidence type="ECO:0000250" key="2">
    <source>
        <dbReference type="UniProtKB" id="Q9Y2V2"/>
    </source>
</evidence>
<evidence type="ECO:0000256" key="3">
    <source>
        <dbReference type="SAM" id="MobiDB-lite"/>
    </source>
</evidence>
<evidence type="ECO:0000269" key="4">
    <source>
    </source>
</evidence>
<evidence type="ECO:0000269" key="5">
    <source>
    </source>
</evidence>
<evidence type="ECO:0007744" key="6">
    <source>
    </source>
</evidence>
<evidence type="ECO:0007744" key="7">
    <source>
    </source>
</evidence>
<evidence type="ECO:0007744" key="8">
    <source>
    </source>
</evidence>
<keyword id="KW-0007">Acetylation</keyword>
<keyword id="KW-0963">Cytoplasm</keyword>
<keyword id="KW-0597">Phosphoprotein</keyword>
<keyword id="KW-1185">Reference proteome</keyword>
<keyword id="KW-0694">RNA-binding</keyword>
<accession>Q9WU49</accession>
<name>CHSP1_RAT</name>
<gene>
    <name type="primary">Carhsp1</name>
</gene>
<dbReference type="EMBL" id="AF115346">
    <property type="protein sequence ID" value="AAD25022.1"/>
    <property type="molecule type" value="mRNA"/>
</dbReference>
<dbReference type="EMBL" id="BC071173">
    <property type="protein sequence ID" value="AAH71173.1"/>
    <property type="molecule type" value="mRNA"/>
</dbReference>
<dbReference type="RefSeq" id="NP_690003.1">
    <property type="nucleotide sequence ID" value="NM_152790.3"/>
</dbReference>
<dbReference type="RefSeq" id="XP_006245812.2">
    <property type="nucleotide sequence ID" value="XM_006245750.5"/>
</dbReference>
<dbReference type="SMR" id="Q9WU49"/>
<dbReference type="FunCoup" id="Q9WU49">
    <property type="interactions" value="1963"/>
</dbReference>
<dbReference type="STRING" id="10116.ENSRNOP00000003514"/>
<dbReference type="iPTMnet" id="Q9WU49"/>
<dbReference type="PhosphoSitePlus" id="Q9WU49"/>
<dbReference type="jPOST" id="Q9WU49"/>
<dbReference type="PaxDb" id="10116-ENSRNOP00000003514"/>
<dbReference type="Ensembl" id="ENSRNOT00000003514.6">
    <property type="protein sequence ID" value="ENSRNOP00000003514.3"/>
    <property type="gene ID" value="ENSRNOG00000002610.6"/>
</dbReference>
<dbReference type="GeneID" id="260416"/>
<dbReference type="KEGG" id="rno:260416"/>
<dbReference type="UCSC" id="RGD:708415">
    <property type="organism name" value="rat"/>
</dbReference>
<dbReference type="AGR" id="RGD:708415"/>
<dbReference type="CTD" id="23589"/>
<dbReference type="RGD" id="708415">
    <property type="gene designation" value="Carhsp1"/>
</dbReference>
<dbReference type="eggNOG" id="KOG3070">
    <property type="taxonomic scope" value="Eukaryota"/>
</dbReference>
<dbReference type="GeneTree" id="ENSGT00390000000022"/>
<dbReference type="HOGENOM" id="CLU_139526_1_0_1"/>
<dbReference type="InParanoid" id="Q9WU49"/>
<dbReference type="OMA" id="YRGVCKC"/>
<dbReference type="PhylomeDB" id="Q9WU49"/>
<dbReference type="TreeFam" id="TF324381"/>
<dbReference type="PRO" id="PR:Q9WU49"/>
<dbReference type="Proteomes" id="UP000002494">
    <property type="component" value="Chromosome 10"/>
</dbReference>
<dbReference type="Bgee" id="ENSRNOG00000002610">
    <property type="expression patterns" value="Expressed in liver and 19 other cell types or tissues"/>
</dbReference>
<dbReference type="GO" id="GO:0005737">
    <property type="term" value="C:cytoplasm"/>
    <property type="evidence" value="ECO:0000318"/>
    <property type="project" value="GO_Central"/>
</dbReference>
<dbReference type="GO" id="GO:0000177">
    <property type="term" value="C:cytoplasmic exosome (RNase complex)"/>
    <property type="evidence" value="ECO:0000266"/>
    <property type="project" value="RGD"/>
</dbReference>
<dbReference type="GO" id="GO:0005829">
    <property type="term" value="C:cytosol"/>
    <property type="evidence" value="ECO:0000250"/>
    <property type="project" value="UniProtKB"/>
</dbReference>
<dbReference type="GO" id="GO:0043186">
    <property type="term" value="C:P granule"/>
    <property type="evidence" value="ECO:0000250"/>
    <property type="project" value="UniProtKB"/>
</dbReference>
<dbReference type="GO" id="GO:0000932">
    <property type="term" value="C:P-body"/>
    <property type="evidence" value="ECO:0007669"/>
    <property type="project" value="UniProtKB-SubCell"/>
</dbReference>
<dbReference type="GO" id="GO:0003730">
    <property type="term" value="F:mRNA 3'-UTR binding"/>
    <property type="evidence" value="ECO:0000250"/>
    <property type="project" value="UniProtKB"/>
</dbReference>
<dbReference type="GO" id="GO:0043488">
    <property type="term" value="P:regulation of mRNA stability"/>
    <property type="evidence" value="ECO:0000250"/>
    <property type="project" value="UniProtKB"/>
</dbReference>
<dbReference type="CDD" id="cd04458">
    <property type="entry name" value="CSP_CDS"/>
    <property type="match status" value="1"/>
</dbReference>
<dbReference type="FunFam" id="2.40.50.140:FF:000086">
    <property type="entry name" value="Cold shock domain-containing protein C2"/>
    <property type="match status" value="1"/>
</dbReference>
<dbReference type="Gene3D" id="2.40.50.140">
    <property type="entry name" value="Nucleic acid-binding proteins"/>
    <property type="match status" value="1"/>
</dbReference>
<dbReference type="InterPro" id="IPR052069">
    <property type="entry name" value="Ca-reg_mRNA-binding_domain"/>
</dbReference>
<dbReference type="InterPro" id="IPR011129">
    <property type="entry name" value="CSD"/>
</dbReference>
<dbReference type="InterPro" id="IPR019844">
    <property type="entry name" value="CSD_CS"/>
</dbReference>
<dbReference type="InterPro" id="IPR002059">
    <property type="entry name" value="CSP_DNA-bd"/>
</dbReference>
<dbReference type="InterPro" id="IPR012340">
    <property type="entry name" value="NA-bd_OB-fold"/>
</dbReference>
<dbReference type="PANTHER" id="PTHR12962">
    <property type="entry name" value="CALCIUM-REGULATED HEAT STABLE PROTEIN CRHSP-24-RELATED"/>
    <property type="match status" value="1"/>
</dbReference>
<dbReference type="PANTHER" id="PTHR12962:SF3">
    <property type="entry name" value="CALCIUM-REGULATED HEAT-STABLE PROTEIN 1"/>
    <property type="match status" value="1"/>
</dbReference>
<dbReference type="Pfam" id="PF00313">
    <property type="entry name" value="CSD"/>
    <property type="match status" value="1"/>
</dbReference>
<dbReference type="SMART" id="SM00357">
    <property type="entry name" value="CSP"/>
    <property type="match status" value="1"/>
</dbReference>
<dbReference type="SUPFAM" id="SSF50249">
    <property type="entry name" value="Nucleic acid-binding proteins"/>
    <property type="match status" value="1"/>
</dbReference>
<dbReference type="PROSITE" id="PS00352">
    <property type="entry name" value="CSD_1"/>
    <property type="match status" value="1"/>
</dbReference>
<dbReference type="PROSITE" id="PS51857">
    <property type="entry name" value="CSD_2"/>
    <property type="match status" value="1"/>
</dbReference>
<sequence length="147" mass="15906">MSSEPPPPPQPPTHQTSIGLLDTPRARDRSPSPLRGNVVPSPLPTRRTRTFSATVRASQGPVYKGVCKCFCRSKGHGFITPADGGPDIFLHISDVEGEYVPVEGDEVTYKMCSIPPKNEKLQAVEVVITHLAPGTKHETWSGHVISS</sequence>
<proteinExistence type="evidence at protein level"/>